<protein>
    <recommendedName>
        <fullName evidence="5">Beta,beta-carotene 15,15'-dioxygenase</fullName>
        <ecNumber evidence="3">1.13.11.63</ecNumber>
    </recommendedName>
    <alternativeName>
        <fullName>Beta-carotene dioxygenase 1</fullName>
    </alternativeName>
    <alternativeName>
        <fullName evidence="1">Beta-carotene oxygenase 1</fullName>
    </alternativeName>
</protein>
<gene>
    <name evidence="1" type="primary">BCO1</name>
    <name type="synonym">BCDO</name>
    <name type="synonym">BCMO1</name>
</gene>
<accession>Q9I993</accession>
<organism>
    <name type="scientific">Gallus gallus</name>
    <name type="common">Chicken</name>
    <dbReference type="NCBI Taxonomy" id="9031"/>
    <lineage>
        <taxon>Eukaryota</taxon>
        <taxon>Metazoa</taxon>
        <taxon>Chordata</taxon>
        <taxon>Craniata</taxon>
        <taxon>Vertebrata</taxon>
        <taxon>Euteleostomi</taxon>
        <taxon>Archelosauria</taxon>
        <taxon>Archosauria</taxon>
        <taxon>Dinosauria</taxon>
        <taxon>Saurischia</taxon>
        <taxon>Theropoda</taxon>
        <taxon>Coelurosauria</taxon>
        <taxon>Aves</taxon>
        <taxon>Neognathae</taxon>
        <taxon>Galloanserae</taxon>
        <taxon>Galliformes</taxon>
        <taxon>Phasianidae</taxon>
        <taxon>Phasianinae</taxon>
        <taxon>Gallus</taxon>
    </lineage>
</organism>
<evidence type="ECO:0000250" key="1">
    <source>
        <dbReference type="UniProtKB" id="Q9HAY6"/>
    </source>
</evidence>
<evidence type="ECO:0000250" key="2">
    <source>
        <dbReference type="UniProtKB" id="Q9JJS6"/>
    </source>
</evidence>
<evidence type="ECO:0000269" key="3">
    <source>
    </source>
</evidence>
<evidence type="ECO:0000305" key="4"/>
<evidence type="ECO:0000305" key="5">
    <source>
    </source>
</evidence>
<name>BCDO1_CHICK</name>
<sequence>METIFNRNKEEHPEPIKAEVQGQLPTWLQGVLLRNGPGMHTIGDTKYNHWFDGLALLHSFTFKNGEVYYRSKYLRSDTYNCNIEANRIVVSEFGTMAYPDPCKNIFAKAFSYLSHTIPEFTDNCLINIMKTGDDYYATSETNFIRKIDPQTLETLDKVDYSKYVAVNLATSHPHYDSAGNILNMGTSIVDKGRTKYVLFKIPSSVPEKEKKKSCFKHLEVVCSIPSRSLLQPSYYHSFGITENYIVFIEQPFKLDIVKLATAYIRGVNWASCLSFHKEDKTWFHFVDRKTKKEVSTKFYTDALVLYHHINAYEEDGHVVFDIVAYRDNSLYDMFYLKKLDKDFEVNNKLTSIPTCKRFVVPLQYDKDAEVGSNLVKLPTSATAVKEKDGSIYCQPEILCEGIELPRVNYDYNGKKYKYVYATEVQWSPVPTKIAKLNVQTKEVLHWGEDHCWPSEPIFVPSPDAREEDEGVVLTCVVVSEPNKAPFLLILDAKTFKELGRATVNVEMHLDLHGMFIPQNDLGAETE</sequence>
<dbReference type="EC" id="1.13.11.63" evidence="3"/>
<dbReference type="EMBL" id="AJ271386">
    <property type="protein sequence ID" value="CAB90825.1"/>
    <property type="molecule type" value="mRNA"/>
</dbReference>
<dbReference type="RefSeq" id="NP_001351831.1">
    <property type="nucleotide sequence ID" value="NM_001364902.2"/>
</dbReference>
<dbReference type="RefSeq" id="NP_001384065.1">
    <property type="nucleotide sequence ID" value="NM_001397136.1"/>
</dbReference>
<dbReference type="RefSeq" id="NP_989966.1">
    <property type="nucleotide sequence ID" value="NM_204635.1"/>
</dbReference>
<dbReference type="RefSeq" id="XP_015148005.1">
    <property type="nucleotide sequence ID" value="XM_015292519.1"/>
</dbReference>
<dbReference type="RefSeq" id="XP_015148006.1">
    <property type="nucleotide sequence ID" value="XM_015292520.1"/>
</dbReference>
<dbReference type="SMR" id="Q9I993"/>
<dbReference type="FunCoup" id="Q9I993">
    <property type="interactions" value="100"/>
</dbReference>
<dbReference type="STRING" id="9031.ENSGALP00000008671"/>
<dbReference type="PaxDb" id="9031-ENSGALP00000008671"/>
<dbReference type="Ensembl" id="ENSGALT00010018751.1">
    <property type="protein sequence ID" value="ENSGALP00010010301.1"/>
    <property type="gene ID" value="ENSGALG00010007880.1"/>
</dbReference>
<dbReference type="GeneID" id="395346"/>
<dbReference type="KEGG" id="gga:395346"/>
<dbReference type="VEuPathDB" id="HostDB:geneid_395346"/>
<dbReference type="eggNOG" id="KOG1285">
    <property type="taxonomic scope" value="Eukaryota"/>
</dbReference>
<dbReference type="GeneTree" id="ENSGT00950000182913"/>
<dbReference type="HOGENOM" id="CLU_016472_1_1_1"/>
<dbReference type="InParanoid" id="Q9I993"/>
<dbReference type="OMA" id="SCMAFHR"/>
<dbReference type="OrthoDB" id="407010at2759"/>
<dbReference type="PhylomeDB" id="Q9I993"/>
<dbReference type="TreeFam" id="TF314019"/>
<dbReference type="BioCyc" id="MetaCyc:MONOMER-17624"/>
<dbReference type="BRENDA" id="1.13.11.63">
    <property type="organism ID" value="1306"/>
</dbReference>
<dbReference type="Reactome" id="R-GGA-975634">
    <property type="pathway name" value="Retinoid metabolism and transport"/>
</dbReference>
<dbReference type="UniPathway" id="UPA00912"/>
<dbReference type="PRO" id="PR:Q9I993"/>
<dbReference type="Proteomes" id="UP000000539">
    <property type="component" value="Chromosome 11"/>
</dbReference>
<dbReference type="Bgee" id="ENSGALG00000005408">
    <property type="expression patterns" value="Expressed in liver and 12 other cell types or tissues"/>
</dbReference>
<dbReference type="GO" id="GO:0005829">
    <property type="term" value="C:cytosol"/>
    <property type="evidence" value="ECO:0000314"/>
    <property type="project" value="UniProtKB"/>
</dbReference>
<dbReference type="GO" id="GO:0003834">
    <property type="term" value="F:beta-carotene 15,15'-dioxygenase activity"/>
    <property type="evidence" value="ECO:0000314"/>
    <property type="project" value="UniProtKB"/>
</dbReference>
<dbReference type="GO" id="GO:0010436">
    <property type="term" value="F:carotenoid dioxygenase activity"/>
    <property type="evidence" value="ECO:0000318"/>
    <property type="project" value="GO_Central"/>
</dbReference>
<dbReference type="GO" id="GO:0046872">
    <property type="term" value="F:metal ion binding"/>
    <property type="evidence" value="ECO:0007669"/>
    <property type="project" value="UniProtKB-KW"/>
</dbReference>
<dbReference type="GO" id="GO:0004497">
    <property type="term" value="F:monooxygenase activity"/>
    <property type="evidence" value="ECO:0000314"/>
    <property type="project" value="AgBase"/>
</dbReference>
<dbReference type="GO" id="GO:1901810">
    <property type="term" value="P:beta-carotene metabolic process"/>
    <property type="evidence" value="ECO:0000314"/>
    <property type="project" value="AgBase"/>
</dbReference>
<dbReference type="GO" id="GO:0016121">
    <property type="term" value="P:carotene catabolic process"/>
    <property type="evidence" value="ECO:0000250"/>
    <property type="project" value="UniProtKB"/>
</dbReference>
<dbReference type="GO" id="GO:0032526">
    <property type="term" value="P:response to retinoic acid"/>
    <property type="evidence" value="ECO:0000314"/>
    <property type="project" value="AgBase"/>
</dbReference>
<dbReference type="GO" id="GO:0042574">
    <property type="term" value="P:retinal metabolic process"/>
    <property type="evidence" value="ECO:0000314"/>
    <property type="project" value="AgBase"/>
</dbReference>
<dbReference type="GO" id="GO:0001523">
    <property type="term" value="P:retinoid metabolic process"/>
    <property type="evidence" value="ECO:0000314"/>
    <property type="project" value="UniProtKB"/>
</dbReference>
<dbReference type="GO" id="GO:0042572">
    <property type="term" value="P:retinol metabolic process"/>
    <property type="evidence" value="ECO:0007669"/>
    <property type="project" value="UniProtKB-UniPathway"/>
</dbReference>
<dbReference type="InterPro" id="IPR004294">
    <property type="entry name" value="Carotenoid_Oase"/>
</dbReference>
<dbReference type="PANTHER" id="PTHR10543:SF132">
    <property type="entry name" value="BETA,BETA-CAROTENE 15,15'-DIOXYGENASE"/>
    <property type="match status" value="1"/>
</dbReference>
<dbReference type="PANTHER" id="PTHR10543">
    <property type="entry name" value="BETA-CAROTENE DIOXYGENASE"/>
    <property type="match status" value="1"/>
</dbReference>
<dbReference type="Pfam" id="PF03055">
    <property type="entry name" value="RPE65"/>
    <property type="match status" value="1"/>
</dbReference>
<proteinExistence type="evidence at protein level"/>
<reference key="1">
    <citation type="journal article" date="2000" name="Biochem. Biophys. Res. Commun.">
        <title>Cloning and expression of beta,beta-carotene-15,15'-dioxygenase.</title>
        <authorList>
            <person name="Wyss A."/>
            <person name="Wirtz G.M."/>
            <person name="Woggon W.D."/>
            <person name="Brugger R."/>
            <person name="Wyss M."/>
            <person name="Friedlein A."/>
            <person name="Bachmann H."/>
            <person name="Hunziker W."/>
        </authorList>
    </citation>
    <scope>NUCLEOTIDE SEQUENCE [MRNA]</scope>
    <scope>PARTIAL PROTEIN SEQUENCE</scope>
    <scope>FUNCTION</scope>
    <scope>CATALYTIC ACTIVITY</scope>
    <scope>PATHWAY</scope>
    <scope>SUBCELLULAR LOCATION</scope>
    <source>
        <strain>LSL Lohmann</strain>
        <tissue>Duodenum</tissue>
    </source>
</reference>
<reference key="2">
    <citation type="journal article" date="2001" name="Biochem. J.">
        <title>Expression pattern and localization of beta,beta-carotene 15,15'-dioxygenase in different tissues.</title>
        <authorList>
            <person name="Wyss A."/>
            <person name="Wirtz G.M."/>
            <person name="Woggon W.D."/>
            <person name="Brugger R."/>
            <person name="Wyss M."/>
            <person name="Friedlein A."/>
            <person name="Riss G."/>
            <person name="Bachmann H."/>
            <person name="Hunziker W."/>
        </authorList>
    </citation>
    <scope>NUCLEOTIDE SEQUENCE [MRNA]</scope>
    <source>
        <strain>LSL Lohmann</strain>
        <tissue>Duodenum</tissue>
    </source>
</reference>
<comment type="function">
    <text evidence="3">Symmetrically cleaves beta-carotene into two molecules of retinal using a dioxygenase mechanism.</text>
</comment>
<comment type="catalytic activity">
    <reaction evidence="3">
        <text>all-trans-beta-carotene + O2 = 2 all-trans-retinal</text>
        <dbReference type="Rhea" id="RHEA:32887"/>
        <dbReference type="ChEBI" id="CHEBI:15379"/>
        <dbReference type="ChEBI" id="CHEBI:17579"/>
        <dbReference type="ChEBI" id="CHEBI:17898"/>
        <dbReference type="EC" id="1.13.11.63"/>
    </reaction>
    <physiologicalReaction direction="left-to-right" evidence="5">
        <dbReference type="Rhea" id="RHEA:32888"/>
    </physiologicalReaction>
</comment>
<comment type="cofactor">
    <cofactor evidence="2">
        <name>Fe(2+)</name>
        <dbReference type="ChEBI" id="CHEBI:29033"/>
    </cofactor>
    <text evidence="2">Binds 1 Fe(2+) ion per subunit.</text>
</comment>
<comment type="pathway">
    <text evidence="5">Cofactor metabolism; retinol metabolism.</text>
</comment>
<comment type="subcellular location">
    <subcellularLocation>
        <location evidence="5">Cytoplasm</location>
        <location evidence="5">Cytosol</location>
    </subcellularLocation>
</comment>
<comment type="similarity">
    <text evidence="4">Belongs to the carotenoid oxygenase family.</text>
</comment>
<feature type="chain" id="PRO_0000143936" description="Beta,beta-carotene 15,15'-dioxygenase">
    <location>
        <begin position="1"/>
        <end position="526"/>
    </location>
</feature>
<feature type="binding site" evidence="2">
    <location>
        <position position="172"/>
    </location>
    <ligand>
        <name>Fe cation</name>
        <dbReference type="ChEBI" id="CHEBI:24875"/>
        <note>catalytic</note>
    </ligand>
</feature>
<feature type="binding site" evidence="2">
    <location>
        <position position="236"/>
    </location>
    <ligand>
        <name>Fe cation</name>
        <dbReference type="ChEBI" id="CHEBI:24875"/>
        <note>catalytic</note>
    </ligand>
</feature>
<feature type="binding site" evidence="2">
    <location>
        <position position="307"/>
    </location>
    <ligand>
        <name>Fe cation</name>
        <dbReference type="ChEBI" id="CHEBI:24875"/>
        <note>catalytic</note>
    </ligand>
</feature>
<feature type="binding site" evidence="2">
    <location>
        <position position="512"/>
    </location>
    <ligand>
        <name>Fe cation</name>
        <dbReference type="ChEBI" id="CHEBI:24875"/>
        <note>catalytic</note>
    </ligand>
</feature>
<keyword id="KW-0963">Cytoplasm</keyword>
<keyword id="KW-0223">Dioxygenase</keyword>
<keyword id="KW-0903">Direct protein sequencing</keyword>
<keyword id="KW-0408">Iron</keyword>
<keyword id="KW-0443">Lipid metabolism</keyword>
<keyword id="KW-0479">Metal-binding</keyword>
<keyword id="KW-0560">Oxidoreductase</keyword>
<keyword id="KW-1185">Reference proteome</keyword>